<gene>
    <name evidence="1" type="primary">rpmA</name>
    <name type="ordered locus">Smlt1279</name>
</gene>
<dbReference type="EMBL" id="AM743169">
    <property type="protein sequence ID" value="CAQ44829.1"/>
    <property type="molecule type" value="Genomic_DNA"/>
</dbReference>
<dbReference type="RefSeq" id="WP_005408558.1">
    <property type="nucleotide sequence ID" value="NC_010943.1"/>
</dbReference>
<dbReference type="SMR" id="B2FTD2"/>
<dbReference type="EnsemblBacteria" id="CAQ44829">
    <property type="protein sequence ID" value="CAQ44829"/>
    <property type="gene ID" value="Smlt1279"/>
</dbReference>
<dbReference type="GeneID" id="93832359"/>
<dbReference type="KEGG" id="sml:Smlt1279"/>
<dbReference type="eggNOG" id="COG0211">
    <property type="taxonomic scope" value="Bacteria"/>
</dbReference>
<dbReference type="HOGENOM" id="CLU_095424_4_1_6"/>
<dbReference type="Proteomes" id="UP000008840">
    <property type="component" value="Chromosome"/>
</dbReference>
<dbReference type="GO" id="GO:0022625">
    <property type="term" value="C:cytosolic large ribosomal subunit"/>
    <property type="evidence" value="ECO:0007669"/>
    <property type="project" value="TreeGrafter"/>
</dbReference>
<dbReference type="GO" id="GO:0003735">
    <property type="term" value="F:structural constituent of ribosome"/>
    <property type="evidence" value="ECO:0007669"/>
    <property type="project" value="InterPro"/>
</dbReference>
<dbReference type="GO" id="GO:0006412">
    <property type="term" value="P:translation"/>
    <property type="evidence" value="ECO:0007669"/>
    <property type="project" value="UniProtKB-UniRule"/>
</dbReference>
<dbReference type="FunFam" id="2.40.50.100:FF:000001">
    <property type="entry name" value="50S ribosomal protein L27"/>
    <property type="match status" value="1"/>
</dbReference>
<dbReference type="Gene3D" id="2.40.50.100">
    <property type="match status" value="1"/>
</dbReference>
<dbReference type="HAMAP" id="MF_00539">
    <property type="entry name" value="Ribosomal_bL27"/>
    <property type="match status" value="1"/>
</dbReference>
<dbReference type="InterPro" id="IPR001684">
    <property type="entry name" value="Ribosomal_bL27"/>
</dbReference>
<dbReference type="InterPro" id="IPR018261">
    <property type="entry name" value="Ribosomal_bL27_CS"/>
</dbReference>
<dbReference type="NCBIfam" id="TIGR00062">
    <property type="entry name" value="L27"/>
    <property type="match status" value="1"/>
</dbReference>
<dbReference type="PANTHER" id="PTHR15893:SF0">
    <property type="entry name" value="LARGE RIBOSOMAL SUBUNIT PROTEIN BL27M"/>
    <property type="match status" value="1"/>
</dbReference>
<dbReference type="PANTHER" id="PTHR15893">
    <property type="entry name" value="RIBOSOMAL PROTEIN L27"/>
    <property type="match status" value="1"/>
</dbReference>
<dbReference type="Pfam" id="PF01016">
    <property type="entry name" value="Ribosomal_L27"/>
    <property type="match status" value="1"/>
</dbReference>
<dbReference type="PRINTS" id="PR00063">
    <property type="entry name" value="RIBOSOMALL27"/>
</dbReference>
<dbReference type="SUPFAM" id="SSF110324">
    <property type="entry name" value="Ribosomal L27 protein-like"/>
    <property type="match status" value="1"/>
</dbReference>
<dbReference type="PROSITE" id="PS00831">
    <property type="entry name" value="RIBOSOMAL_L27"/>
    <property type="match status" value="1"/>
</dbReference>
<sequence length="87" mass="9205">MAHKKGVGSSRNGRDSNPKYLGVKIFGGQAIEAGNIIVRQRGTQFHPGTGVGLGRDHTLFALVDGKVEFSVKGAKKRRTVSIVSADA</sequence>
<name>RL27_STRMK</name>
<comment type="similarity">
    <text evidence="1">Belongs to the bacterial ribosomal protein bL27 family.</text>
</comment>
<keyword id="KW-1185">Reference proteome</keyword>
<keyword id="KW-0687">Ribonucleoprotein</keyword>
<keyword id="KW-0689">Ribosomal protein</keyword>
<accession>B2FTD2</accession>
<proteinExistence type="inferred from homology"/>
<feature type="chain" id="PRO_1000128813" description="Large ribosomal subunit protein bL27">
    <location>
        <begin position="1"/>
        <end position="87"/>
    </location>
</feature>
<organism>
    <name type="scientific">Stenotrophomonas maltophilia (strain K279a)</name>
    <dbReference type="NCBI Taxonomy" id="522373"/>
    <lineage>
        <taxon>Bacteria</taxon>
        <taxon>Pseudomonadati</taxon>
        <taxon>Pseudomonadota</taxon>
        <taxon>Gammaproteobacteria</taxon>
        <taxon>Lysobacterales</taxon>
        <taxon>Lysobacteraceae</taxon>
        <taxon>Stenotrophomonas</taxon>
        <taxon>Stenotrophomonas maltophilia group</taxon>
    </lineage>
</organism>
<protein>
    <recommendedName>
        <fullName evidence="1">Large ribosomal subunit protein bL27</fullName>
    </recommendedName>
    <alternativeName>
        <fullName evidence="2">50S ribosomal protein L27</fullName>
    </alternativeName>
</protein>
<evidence type="ECO:0000255" key="1">
    <source>
        <dbReference type="HAMAP-Rule" id="MF_00539"/>
    </source>
</evidence>
<evidence type="ECO:0000305" key="2"/>
<reference key="1">
    <citation type="journal article" date="2008" name="Genome Biol.">
        <title>The complete genome, comparative and functional analysis of Stenotrophomonas maltophilia reveals an organism heavily shielded by drug resistance determinants.</title>
        <authorList>
            <person name="Crossman L.C."/>
            <person name="Gould V.C."/>
            <person name="Dow J.M."/>
            <person name="Vernikos G.S."/>
            <person name="Okazaki A."/>
            <person name="Sebaihia M."/>
            <person name="Saunders D."/>
            <person name="Arrowsmith C."/>
            <person name="Carver T."/>
            <person name="Peters N."/>
            <person name="Adlem E."/>
            <person name="Kerhornou A."/>
            <person name="Lord A."/>
            <person name="Murphy L."/>
            <person name="Seeger K."/>
            <person name="Squares R."/>
            <person name="Rutter S."/>
            <person name="Quail M.A."/>
            <person name="Rajandream M.A."/>
            <person name="Harris D."/>
            <person name="Churcher C."/>
            <person name="Bentley S.D."/>
            <person name="Parkhill J."/>
            <person name="Thomson N.R."/>
            <person name="Avison M.B."/>
        </authorList>
    </citation>
    <scope>NUCLEOTIDE SEQUENCE [LARGE SCALE GENOMIC DNA]</scope>
    <source>
        <strain>K279a</strain>
    </source>
</reference>